<evidence type="ECO:0000250" key="1"/>
<evidence type="ECO:0000255" key="2">
    <source>
        <dbReference type="PROSITE-ProRule" id="PRU00200"/>
    </source>
</evidence>
<evidence type="ECO:0000305" key="3"/>
<protein>
    <recommendedName>
        <fullName>Translation machinery-associated protein 22</fullName>
    </recommendedName>
</protein>
<proteinExistence type="inferred from homology"/>
<name>DENR_ASPCL</name>
<feature type="chain" id="PRO_0000320433" description="Translation machinery-associated protein 22">
    <location>
        <begin position="1"/>
        <end position="194"/>
    </location>
</feature>
<feature type="domain" description="SUI1" evidence="2">
    <location>
        <begin position="102"/>
        <end position="173"/>
    </location>
</feature>
<gene>
    <name type="primary">tma22</name>
    <name type="ORF">ACLA_042980</name>
</gene>
<keyword id="KW-0963">Cytoplasm</keyword>
<keyword id="KW-1185">Reference proteome</keyword>
<keyword id="KW-0687">Ribonucleoprotein</keyword>
<keyword id="KW-0689">Ribosomal protein</keyword>
<sequence length="194" mass="21532">MGEIAQPAFFESKLKQIVYCGVCTLPPEYCEFGGTAKKCEEWLKDNHEETYQRLYSEEALSSNLSTLSVSVRERAAKDAAKKEAKAALAEARDAERKAAAKVQIKRVERNKRKHVTVITGLEVHGLENKKVAKELGKKFATGSSVTKSPAGVEEITVQGDVSEDVQEWLLEVYGKELPESNIELVEDKKKKSSS</sequence>
<comment type="subunit">
    <text evidence="1">Interacts with the 40S ribosomal subunit.</text>
</comment>
<comment type="subcellular location">
    <subcellularLocation>
        <location evidence="1">Cytoplasm</location>
    </subcellularLocation>
</comment>
<comment type="domain">
    <text>The SUI1 domain may be involved in RNA binding.</text>
</comment>
<comment type="similarity">
    <text evidence="3">Belongs to the DENR family.</text>
</comment>
<dbReference type="EMBL" id="DS027046">
    <property type="protein sequence ID" value="EAW13580.1"/>
    <property type="molecule type" value="Genomic_DNA"/>
</dbReference>
<dbReference type="RefSeq" id="XP_001275006.1">
    <property type="nucleotide sequence ID" value="XM_001275005.1"/>
</dbReference>
<dbReference type="SMR" id="A1C8E3"/>
<dbReference type="STRING" id="344612.A1C8E3"/>
<dbReference type="EnsemblFungi" id="EAW13580">
    <property type="protein sequence ID" value="EAW13580"/>
    <property type="gene ID" value="ACLA_042980"/>
</dbReference>
<dbReference type="GeneID" id="4707270"/>
<dbReference type="KEGG" id="act:ACLA_042980"/>
<dbReference type="VEuPathDB" id="FungiDB:ACLA_042980"/>
<dbReference type="eggNOG" id="KOG3239">
    <property type="taxonomic scope" value="Eukaryota"/>
</dbReference>
<dbReference type="HOGENOM" id="CLU_073511_0_1_1"/>
<dbReference type="OMA" id="EVFEIDM"/>
<dbReference type="OrthoDB" id="277199at2759"/>
<dbReference type="Proteomes" id="UP000006701">
    <property type="component" value="Unassembled WGS sequence"/>
</dbReference>
<dbReference type="GO" id="GO:0005737">
    <property type="term" value="C:cytoplasm"/>
    <property type="evidence" value="ECO:0007669"/>
    <property type="project" value="UniProtKB-SubCell"/>
</dbReference>
<dbReference type="GO" id="GO:1990904">
    <property type="term" value="C:ribonucleoprotein complex"/>
    <property type="evidence" value="ECO:0007669"/>
    <property type="project" value="UniProtKB-KW"/>
</dbReference>
<dbReference type="GO" id="GO:0005840">
    <property type="term" value="C:ribosome"/>
    <property type="evidence" value="ECO:0007669"/>
    <property type="project" value="UniProtKB-KW"/>
</dbReference>
<dbReference type="GO" id="GO:0003729">
    <property type="term" value="F:mRNA binding"/>
    <property type="evidence" value="ECO:0007669"/>
    <property type="project" value="TreeGrafter"/>
</dbReference>
<dbReference type="GO" id="GO:0003743">
    <property type="term" value="F:translation initiation factor activity"/>
    <property type="evidence" value="ECO:0007669"/>
    <property type="project" value="InterPro"/>
</dbReference>
<dbReference type="GO" id="GO:0001731">
    <property type="term" value="P:formation of translation preinitiation complex"/>
    <property type="evidence" value="ECO:0007669"/>
    <property type="project" value="TreeGrafter"/>
</dbReference>
<dbReference type="GO" id="GO:0000184">
    <property type="term" value="P:nuclear-transcribed mRNA catabolic process, nonsense-mediated decay"/>
    <property type="evidence" value="ECO:0007669"/>
    <property type="project" value="EnsemblFungi"/>
</dbReference>
<dbReference type="GO" id="GO:0032790">
    <property type="term" value="P:ribosome disassembly"/>
    <property type="evidence" value="ECO:0007669"/>
    <property type="project" value="EnsemblFungi"/>
</dbReference>
<dbReference type="GO" id="GO:0002188">
    <property type="term" value="P:translation reinitiation"/>
    <property type="evidence" value="ECO:0007669"/>
    <property type="project" value="TreeGrafter"/>
</dbReference>
<dbReference type="CDD" id="cd11607">
    <property type="entry name" value="DENR_C"/>
    <property type="match status" value="1"/>
</dbReference>
<dbReference type="FunFam" id="3.30.780.10:FF:000014">
    <property type="entry name" value="Translation machinery-associated protein 22"/>
    <property type="match status" value="1"/>
</dbReference>
<dbReference type="Gene3D" id="3.30.780.10">
    <property type="entry name" value="SUI1-like domain"/>
    <property type="match status" value="1"/>
</dbReference>
<dbReference type="InterPro" id="IPR050318">
    <property type="entry name" value="DENR/SUI1_TIF"/>
</dbReference>
<dbReference type="InterPro" id="IPR046447">
    <property type="entry name" value="DENR_C"/>
</dbReference>
<dbReference type="InterPro" id="IPR048517">
    <property type="entry name" value="DENR_N"/>
</dbReference>
<dbReference type="InterPro" id="IPR001950">
    <property type="entry name" value="SUI1"/>
</dbReference>
<dbReference type="InterPro" id="IPR036877">
    <property type="entry name" value="SUI1_dom_sf"/>
</dbReference>
<dbReference type="PANTHER" id="PTHR12789:SF0">
    <property type="entry name" value="DENSITY-REGULATED PROTEIN"/>
    <property type="match status" value="1"/>
</dbReference>
<dbReference type="PANTHER" id="PTHR12789">
    <property type="entry name" value="DENSITY-REGULATED PROTEIN HOMOLOG"/>
    <property type="match status" value="1"/>
</dbReference>
<dbReference type="Pfam" id="PF21023">
    <property type="entry name" value="DENR_N"/>
    <property type="match status" value="1"/>
</dbReference>
<dbReference type="Pfam" id="PF01253">
    <property type="entry name" value="SUI1"/>
    <property type="match status" value="1"/>
</dbReference>
<dbReference type="SUPFAM" id="SSF55159">
    <property type="entry name" value="eIF1-like"/>
    <property type="match status" value="1"/>
</dbReference>
<dbReference type="PROSITE" id="PS50296">
    <property type="entry name" value="SUI1"/>
    <property type="match status" value="1"/>
</dbReference>
<reference key="1">
    <citation type="journal article" date="2008" name="PLoS Genet.">
        <title>Genomic islands in the pathogenic filamentous fungus Aspergillus fumigatus.</title>
        <authorList>
            <person name="Fedorova N.D."/>
            <person name="Khaldi N."/>
            <person name="Joardar V.S."/>
            <person name="Maiti R."/>
            <person name="Amedeo P."/>
            <person name="Anderson M.J."/>
            <person name="Crabtree J."/>
            <person name="Silva J.C."/>
            <person name="Badger J.H."/>
            <person name="Albarraq A."/>
            <person name="Angiuoli S."/>
            <person name="Bussey H."/>
            <person name="Bowyer P."/>
            <person name="Cotty P.J."/>
            <person name="Dyer P.S."/>
            <person name="Egan A."/>
            <person name="Galens K."/>
            <person name="Fraser-Liggett C.M."/>
            <person name="Haas B.J."/>
            <person name="Inman J.M."/>
            <person name="Kent R."/>
            <person name="Lemieux S."/>
            <person name="Malavazi I."/>
            <person name="Orvis J."/>
            <person name="Roemer T."/>
            <person name="Ronning C.M."/>
            <person name="Sundaram J.P."/>
            <person name="Sutton G."/>
            <person name="Turner G."/>
            <person name="Venter J.C."/>
            <person name="White O.R."/>
            <person name="Whitty B.R."/>
            <person name="Youngman P."/>
            <person name="Wolfe K.H."/>
            <person name="Goldman G.H."/>
            <person name="Wortman J.R."/>
            <person name="Jiang B."/>
            <person name="Denning D.W."/>
            <person name="Nierman W.C."/>
        </authorList>
    </citation>
    <scope>NUCLEOTIDE SEQUENCE [LARGE SCALE GENOMIC DNA]</scope>
    <source>
        <strain>ATCC 1007 / CBS 513.65 / DSM 816 / NCTC 3887 / NRRL 1 / QM 1276 / 107</strain>
    </source>
</reference>
<organism>
    <name type="scientific">Aspergillus clavatus (strain ATCC 1007 / CBS 513.65 / DSM 816 / NCTC 3887 / NRRL 1 / QM 1276 / 107)</name>
    <dbReference type="NCBI Taxonomy" id="344612"/>
    <lineage>
        <taxon>Eukaryota</taxon>
        <taxon>Fungi</taxon>
        <taxon>Dikarya</taxon>
        <taxon>Ascomycota</taxon>
        <taxon>Pezizomycotina</taxon>
        <taxon>Eurotiomycetes</taxon>
        <taxon>Eurotiomycetidae</taxon>
        <taxon>Eurotiales</taxon>
        <taxon>Aspergillaceae</taxon>
        <taxon>Aspergillus</taxon>
        <taxon>Aspergillus subgen. Fumigati</taxon>
    </lineage>
</organism>
<accession>A1C8E3</accession>